<organism>
    <name type="scientific">Rattus norvegicus</name>
    <name type="common">Rat</name>
    <dbReference type="NCBI Taxonomy" id="10116"/>
    <lineage>
        <taxon>Eukaryota</taxon>
        <taxon>Metazoa</taxon>
        <taxon>Chordata</taxon>
        <taxon>Craniata</taxon>
        <taxon>Vertebrata</taxon>
        <taxon>Euteleostomi</taxon>
        <taxon>Mammalia</taxon>
        <taxon>Eutheria</taxon>
        <taxon>Euarchontoglires</taxon>
        <taxon>Glires</taxon>
        <taxon>Rodentia</taxon>
        <taxon>Myomorpha</taxon>
        <taxon>Muroidea</taxon>
        <taxon>Muridae</taxon>
        <taxon>Murinae</taxon>
        <taxon>Rattus</taxon>
    </lineage>
</organism>
<accession>Q9JHF3</accession>
<feature type="chain" id="PRO_0000451029" description="Prostaglandin E synthase">
    <location>
        <begin position="1"/>
        <end position="153"/>
    </location>
</feature>
<feature type="topological domain" description="Lumenal" evidence="1">
    <location>
        <begin position="1"/>
        <end position="13"/>
    </location>
</feature>
<feature type="transmembrane region" description="Helical" evidence="1">
    <location>
        <begin position="14"/>
        <end position="42"/>
    </location>
</feature>
<feature type="topological domain" description="Cytoplasmic" evidence="1">
    <location>
        <begin position="43"/>
        <end position="61"/>
    </location>
</feature>
<feature type="transmembrane region" description="Helical" evidence="1">
    <location>
        <begin position="62"/>
        <end position="91"/>
    </location>
</feature>
<feature type="topological domain" description="Lumenal" evidence="1">
    <location>
        <begin position="92"/>
        <end position="98"/>
    </location>
</feature>
<feature type="transmembrane region" description="Helical" evidence="1">
    <location>
        <begin position="99"/>
        <end position="120"/>
    </location>
</feature>
<feature type="topological domain" description="Cytoplasmic" evidence="1">
    <location>
        <begin position="121"/>
        <end position="124"/>
    </location>
</feature>
<feature type="transmembrane region" description="Helical" evidence="1">
    <location>
        <begin position="125"/>
        <end position="153"/>
    </location>
</feature>
<feature type="binding site" evidence="1">
    <location>
        <position position="39"/>
    </location>
    <ligand>
        <name>glutathione</name>
        <dbReference type="ChEBI" id="CHEBI:57925"/>
    </ligand>
</feature>
<feature type="binding site" evidence="1">
    <location>
        <begin position="74"/>
        <end position="78"/>
    </location>
    <ligand>
        <name>glutathione</name>
        <dbReference type="ChEBI" id="CHEBI:57925"/>
    </ligand>
</feature>
<feature type="binding site" evidence="1">
    <location>
        <position position="114"/>
    </location>
    <ligand>
        <name>glutathione</name>
        <dbReference type="ChEBI" id="CHEBI:57925"/>
    </ligand>
</feature>
<feature type="binding site" evidence="1">
    <location>
        <position position="118"/>
    </location>
    <ligand>
        <name>glutathione</name>
        <dbReference type="ChEBI" id="CHEBI:57925"/>
    </ligand>
</feature>
<feature type="binding site" evidence="1">
    <location>
        <begin position="127"/>
        <end position="131"/>
    </location>
    <ligand>
        <name>glutathione</name>
        <dbReference type="ChEBI" id="CHEBI:57925"/>
    </ligand>
</feature>
<feature type="site" description="Essential for protaglandin-E synthase activity" evidence="1">
    <location>
        <position position="50"/>
    </location>
</feature>
<feature type="site" description="Essential for protaglandin-E synthase activity" evidence="1">
    <location>
        <position position="127"/>
    </location>
</feature>
<comment type="function">
    <text evidence="1 2 3 4">Terminal enzyme of the cyclooxygenase (COX)-2-mediated prostaglandin E2 (PGE2) biosynthetic pathway. Catalyzes the glutathione-dependent oxidoreduction of prostaglandin endoperoxide H2 (PGH2) to prostaglandin E2 (PGE2) in response to inflammatory stimuli (PubMed:10869354, PubMed:11067848). Plays a key role in inflammation response, fever and pain (By similarity). Also catalyzes the oxidoreduction of endocannabinoids into prostaglandin glycerol esters and PGG2 into 15-hydroperoxy-PGE2. In addition, displays low glutathione transferase and glutathione-dependent peroxidase activities, toward 1-chloro-2,4-dinitrobenzene and 5-hydroperoxyicosatetraenoic acid (5-HPETE), respectively (By similarity).</text>
</comment>
<comment type="catalytic activity">
    <reaction evidence="3 4">
        <text>prostaglandin H2 = prostaglandin E2</text>
        <dbReference type="Rhea" id="RHEA:12893"/>
        <dbReference type="ChEBI" id="CHEBI:57405"/>
        <dbReference type="ChEBI" id="CHEBI:606564"/>
        <dbReference type="EC" id="5.3.99.3"/>
    </reaction>
    <physiologicalReaction direction="left-to-right" evidence="1">
        <dbReference type="Rhea" id="RHEA:12894"/>
    </physiologicalReaction>
</comment>
<comment type="catalytic activity">
    <reaction evidence="1">
        <text>2-glyceryl-prostaglandin H2 = 2-glyceryl-prostaglandin E2</text>
        <dbReference type="Rhea" id="RHEA:53324"/>
        <dbReference type="ChEBI" id="CHEBI:85166"/>
        <dbReference type="ChEBI" id="CHEBI:137172"/>
    </reaction>
    <physiologicalReaction direction="left-to-right" evidence="1">
        <dbReference type="Rhea" id="RHEA:53325"/>
    </physiologicalReaction>
</comment>
<comment type="catalytic activity">
    <reaction evidence="1">
        <text>prostaglandin G2 = (15S)-15-hydroperoxy-prostaglandin E2</text>
        <dbReference type="Rhea" id="RHEA:64364"/>
        <dbReference type="ChEBI" id="CHEBI:82629"/>
        <dbReference type="ChEBI" id="CHEBI:152564"/>
    </reaction>
    <physiologicalReaction direction="left-to-right" evidence="1">
        <dbReference type="Rhea" id="RHEA:64365"/>
    </physiologicalReaction>
</comment>
<comment type="catalytic activity">
    <reaction evidence="1">
        <text>1-chloro-2,4-dinitrobenzene + glutathione = 2,4-dinitrophenyl-S-glutathione + chloride + H(+)</text>
        <dbReference type="Rhea" id="RHEA:51220"/>
        <dbReference type="ChEBI" id="CHEBI:15378"/>
        <dbReference type="ChEBI" id="CHEBI:17996"/>
        <dbReference type="ChEBI" id="CHEBI:34718"/>
        <dbReference type="ChEBI" id="CHEBI:57925"/>
        <dbReference type="ChEBI" id="CHEBI:133977"/>
        <dbReference type="EC" id="2.5.1.18"/>
    </reaction>
</comment>
<comment type="catalytic activity">
    <reaction evidence="1">
        <text>(5S)-hydroperoxy-(6E,8Z,11Z,14Z)-eicosatetraenoate + 2 glutathione = (5S)-hydroxy-(6E,8Z,11Z,14Z)-eicosatetraenoate + glutathione disulfide + H2O</text>
        <dbReference type="Rhea" id="RHEA:48620"/>
        <dbReference type="ChEBI" id="CHEBI:15377"/>
        <dbReference type="ChEBI" id="CHEBI:57450"/>
        <dbReference type="ChEBI" id="CHEBI:57925"/>
        <dbReference type="ChEBI" id="CHEBI:58297"/>
        <dbReference type="ChEBI" id="CHEBI:90632"/>
    </reaction>
</comment>
<comment type="cofactor">
    <cofactor evidence="1">
        <name>glutathione</name>
        <dbReference type="ChEBI" id="CHEBI:57925"/>
    </cofactor>
</comment>
<comment type="activity regulation">
    <text evidence="3">Activity is increased following LPS stimulation and down-regulated by the anti-inflammatory glucocorticoid dexamethasone.</text>
</comment>
<comment type="pathway">
    <text evidence="3">Lipid metabolism; prostaglandin biosynthesis.</text>
</comment>
<comment type="subcellular location">
    <subcellularLocation>
        <location evidence="4">Membrane</location>
        <topology evidence="1">Multi-pass membrane protein</topology>
    </subcellularLocation>
    <subcellularLocation>
        <location evidence="1">Cytoplasm</location>
        <location evidence="1">Perinuclear region</location>
    </subcellularLocation>
    <text evidence="1">Colocalizes with PTGS1/COX-1 and PTGS2/COX-2 in the perinuclear compartment.</text>
</comment>
<comment type="induction">
    <text evidence="3 4">Up-regulated after treatment with LPS or in a rat model of adjuvant-induced arthritis (PubMed:10869354, PubMed:11067848). Down-regulated by the anti-inflammatory glucocorticoid dexamethasone (PubMed:10869354).</text>
</comment>
<comment type="similarity">
    <text evidence="8">Belongs to the MAPEG family.</text>
</comment>
<name>PTGES_RAT</name>
<evidence type="ECO:0000250" key="1">
    <source>
        <dbReference type="UniProtKB" id="O14684"/>
    </source>
</evidence>
<evidence type="ECO:0000250" key="2">
    <source>
        <dbReference type="UniProtKB" id="Q9JM51"/>
    </source>
</evidence>
<evidence type="ECO:0000269" key="3">
    <source>
    </source>
</evidence>
<evidence type="ECO:0000269" key="4">
    <source>
    </source>
</evidence>
<evidence type="ECO:0000303" key="5">
    <source>
    </source>
</evidence>
<evidence type="ECO:0000303" key="6">
    <source>
    </source>
</evidence>
<evidence type="ECO:0000303" key="7">
    <source ref="3"/>
</evidence>
<evidence type="ECO:0000305" key="8"/>
<protein>
    <recommendedName>
        <fullName>Prostaglandin E synthase</fullName>
        <shortName>mPGES-1</shortName>
        <ecNumber evidence="3 4">5.3.99.3</ecNumber>
    </recommendedName>
    <alternativeName>
        <fullName>Glutathione peroxidase PTGES</fullName>
        <ecNumber evidence="1">1.11.1.-</ecNumber>
    </alternativeName>
    <alternativeName>
        <fullName>Glutathione transferase PTGES</fullName>
        <ecNumber evidence="1">2.5.1.18</ecNumber>
    </alternativeName>
    <alternativeName>
        <fullName evidence="7">Inducible prostaglandin E synthase</fullName>
    </alternativeName>
    <alternativeName>
        <fullName>Microsomal prostaglandin E synthase 1</fullName>
    </alternativeName>
</protein>
<proteinExistence type="evidence at protein level"/>
<gene>
    <name type="primary">Ptges</name>
    <name evidence="6" type="synonym">Pges</name>
    <name evidence="5" type="synonym">Pig12</name>
</gene>
<reference key="1">
    <citation type="journal article" date="2000" name="J. Biol. Chem.">
        <title>Regulation of prostaglandin E2 biosynthesis by inducible membrane-associated prostaglandin E2 synthase that acts in concert with cyclooxygenase-2.</title>
        <authorList>
            <person name="Murakami M."/>
            <person name="Naraba H."/>
            <person name="Tanioka T."/>
            <person name="Semmyo N."/>
            <person name="Nakatani Y."/>
            <person name="Kojima F."/>
            <person name="Ikeda T."/>
            <person name="Fueki M."/>
            <person name="Ueno A."/>
            <person name="Oh S."/>
            <person name="Kudo I."/>
        </authorList>
    </citation>
    <scope>NUCLEOTIDE SEQUENCE [MRNA]</scope>
    <scope>CATALYTIC ACTIVITY</scope>
    <scope>FUNCTION</scope>
    <scope>INDUCTION</scope>
    <scope>ACTIVITY REGULATION</scope>
    <scope>PATHWAY</scope>
    <source>
        <strain>Sprague-Dawley</strain>
    </source>
</reference>
<reference key="2">
    <citation type="journal article" date="2000" name="Neurosci. Lett.">
        <title>Expression of prostaglandin E synthase mRNA is induced in beta-amyloid treated rat astrocytes.</title>
        <authorList>
            <person name="Satoh K."/>
            <person name="Nagano Y."/>
            <person name="Shimomura C."/>
            <person name="Suzuki N."/>
            <person name="Saeki Y."/>
            <person name="Yokota H."/>
        </authorList>
    </citation>
    <scope>NUCLEOTIDE SEQUENCE [MRNA]</scope>
    <source>
        <strain>Wistar</strain>
        <tissue>Brain</tissue>
    </source>
</reference>
<reference key="3">
    <citation type="submission" date="2000-09" db="EMBL/GenBank/DDBJ databases">
        <title>inducible prostaglandin E synthase mRNA.</title>
        <authorList>
            <person name="Yamagata K."/>
        </authorList>
    </citation>
    <scope>NUCLEOTIDE SEQUENCE [MRNA]</scope>
    <source>
        <strain>Sprague-Dawley</strain>
        <tissue>Testis</tissue>
    </source>
</reference>
<reference key="4">
    <citation type="journal article" date="2001" name="J. Biol. Chem.">
        <title>Cloning, expression, and up-regulation of inducible rat prostaglandine synthase during lipopolysaccharide-induced pyresis and adjuvant-induced arthritis.</title>
        <authorList>
            <person name="Mancini J.A."/>
            <person name="Blood K."/>
            <person name="Guay J."/>
            <person name="Gordon R."/>
            <person name="Claveau D."/>
            <person name="Chan C.C."/>
            <person name="Riendeau D."/>
        </authorList>
    </citation>
    <scope>NUCLEOTIDE SEQUENCE [MRNA]</scope>
    <scope>CATALYTIC ACTIVITY</scope>
    <scope>FUNCTION</scope>
    <scope>INDUCTION</scope>
    <scope>SUBCELLULAR LOCATION</scope>
</reference>
<reference key="5">
    <citation type="journal article" date="2004" name="Nature">
        <title>Genome sequence of the Brown Norway rat yields insights into mammalian evolution.</title>
        <authorList>
            <person name="Gibbs R.A."/>
            <person name="Weinstock G.M."/>
            <person name="Metzker M.L."/>
            <person name="Muzny D.M."/>
            <person name="Sodergren E.J."/>
            <person name="Scherer S."/>
            <person name="Scott G."/>
            <person name="Steffen D."/>
            <person name="Worley K.C."/>
            <person name="Burch P.E."/>
            <person name="Okwuonu G."/>
            <person name="Hines S."/>
            <person name="Lewis L."/>
            <person name="Deramo C."/>
            <person name="Delgado O."/>
            <person name="Dugan-Rocha S."/>
            <person name="Miner G."/>
            <person name="Morgan M."/>
            <person name="Hawes A."/>
            <person name="Gill R."/>
            <person name="Holt R.A."/>
            <person name="Adams M.D."/>
            <person name="Amanatides P.G."/>
            <person name="Baden-Tillson H."/>
            <person name="Barnstead M."/>
            <person name="Chin S."/>
            <person name="Evans C.A."/>
            <person name="Ferriera S."/>
            <person name="Fosler C."/>
            <person name="Glodek A."/>
            <person name="Gu Z."/>
            <person name="Jennings D."/>
            <person name="Kraft C.L."/>
            <person name="Nguyen T."/>
            <person name="Pfannkoch C.M."/>
            <person name="Sitter C."/>
            <person name="Sutton G.G."/>
            <person name="Venter J.C."/>
            <person name="Woodage T."/>
            <person name="Smith D."/>
            <person name="Lee H.-M."/>
            <person name="Gustafson E."/>
            <person name="Cahill P."/>
            <person name="Kana A."/>
            <person name="Doucette-Stamm L."/>
            <person name="Weinstock K."/>
            <person name="Fechtel K."/>
            <person name="Weiss R.B."/>
            <person name="Dunn D.M."/>
            <person name="Green E.D."/>
            <person name="Blakesley R.W."/>
            <person name="Bouffard G.G."/>
            <person name="De Jong P.J."/>
            <person name="Osoegawa K."/>
            <person name="Zhu B."/>
            <person name="Marra M."/>
            <person name="Schein J."/>
            <person name="Bosdet I."/>
            <person name="Fjell C."/>
            <person name="Jones S."/>
            <person name="Krzywinski M."/>
            <person name="Mathewson C."/>
            <person name="Siddiqui A."/>
            <person name="Wye N."/>
            <person name="McPherson J."/>
            <person name="Zhao S."/>
            <person name="Fraser C.M."/>
            <person name="Shetty J."/>
            <person name="Shatsman S."/>
            <person name="Geer K."/>
            <person name="Chen Y."/>
            <person name="Abramzon S."/>
            <person name="Nierman W.C."/>
            <person name="Havlak P.H."/>
            <person name="Chen R."/>
            <person name="Durbin K.J."/>
            <person name="Egan A."/>
            <person name="Ren Y."/>
            <person name="Song X.-Z."/>
            <person name="Li B."/>
            <person name="Liu Y."/>
            <person name="Qin X."/>
            <person name="Cawley S."/>
            <person name="Cooney A.J."/>
            <person name="D'Souza L.M."/>
            <person name="Martin K."/>
            <person name="Wu J.Q."/>
            <person name="Gonzalez-Garay M.L."/>
            <person name="Jackson A.R."/>
            <person name="Kalafus K.J."/>
            <person name="McLeod M.P."/>
            <person name="Milosavljevic A."/>
            <person name="Virk D."/>
            <person name="Volkov A."/>
            <person name="Wheeler D.A."/>
            <person name="Zhang Z."/>
            <person name="Bailey J.A."/>
            <person name="Eichler E.E."/>
            <person name="Tuzun E."/>
            <person name="Birney E."/>
            <person name="Mongin E."/>
            <person name="Ureta-Vidal A."/>
            <person name="Woodwark C."/>
            <person name="Zdobnov E."/>
            <person name="Bork P."/>
            <person name="Suyama M."/>
            <person name="Torrents D."/>
            <person name="Alexandersson M."/>
            <person name="Trask B.J."/>
            <person name="Young J.M."/>
            <person name="Huang H."/>
            <person name="Wang H."/>
            <person name="Xing H."/>
            <person name="Daniels S."/>
            <person name="Gietzen D."/>
            <person name="Schmidt J."/>
            <person name="Stevens K."/>
            <person name="Vitt U."/>
            <person name="Wingrove J."/>
            <person name="Camara F."/>
            <person name="Mar Alba M."/>
            <person name="Abril J.F."/>
            <person name="Guigo R."/>
            <person name="Smit A."/>
            <person name="Dubchak I."/>
            <person name="Rubin E.M."/>
            <person name="Couronne O."/>
            <person name="Poliakov A."/>
            <person name="Huebner N."/>
            <person name="Ganten D."/>
            <person name="Goesele C."/>
            <person name="Hummel O."/>
            <person name="Kreitler T."/>
            <person name="Lee Y.-A."/>
            <person name="Monti J."/>
            <person name="Schulz H."/>
            <person name="Zimdahl H."/>
            <person name="Himmelbauer H."/>
            <person name="Lehrach H."/>
            <person name="Jacob H.J."/>
            <person name="Bromberg S."/>
            <person name="Gullings-Handley J."/>
            <person name="Jensen-Seaman M.I."/>
            <person name="Kwitek A.E."/>
            <person name="Lazar J."/>
            <person name="Pasko D."/>
            <person name="Tonellato P.J."/>
            <person name="Twigger S."/>
            <person name="Ponting C.P."/>
            <person name="Duarte J.M."/>
            <person name="Rice S."/>
            <person name="Goodstadt L."/>
            <person name="Beatson S.A."/>
            <person name="Emes R.D."/>
            <person name="Winter E.E."/>
            <person name="Webber C."/>
            <person name="Brandt P."/>
            <person name="Nyakatura G."/>
            <person name="Adetobi M."/>
            <person name="Chiaromonte F."/>
            <person name="Elnitski L."/>
            <person name="Eswara P."/>
            <person name="Hardison R.C."/>
            <person name="Hou M."/>
            <person name="Kolbe D."/>
            <person name="Makova K."/>
            <person name="Miller W."/>
            <person name="Nekrutenko A."/>
            <person name="Riemer C."/>
            <person name="Schwartz S."/>
            <person name="Taylor J."/>
            <person name="Yang S."/>
            <person name="Zhang Y."/>
            <person name="Lindpaintner K."/>
            <person name="Andrews T.D."/>
            <person name="Caccamo M."/>
            <person name="Clamp M."/>
            <person name="Clarke L."/>
            <person name="Curwen V."/>
            <person name="Durbin R.M."/>
            <person name="Eyras E."/>
            <person name="Searle S.M."/>
            <person name="Cooper G.M."/>
            <person name="Batzoglou S."/>
            <person name="Brudno M."/>
            <person name="Sidow A."/>
            <person name="Stone E.A."/>
            <person name="Payseur B.A."/>
            <person name="Bourque G."/>
            <person name="Lopez-Otin C."/>
            <person name="Puente X.S."/>
            <person name="Chakrabarti K."/>
            <person name="Chatterji S."/>
            <person name="Dewey C."/>
            <person name="Pachter L."/>
            <person name="Bray N."/>
            <person name="Yap V.B."/>
            <person name="Caspi A."/>
            <person name="Tesler G."/>
            <person name="Pevzner P.A."/>
            <person name="Haussler D."/>
            <person name="Roskin K.M."/>
            <person name="Baertsch R."/>
            <person name="Clawson H."/>
            <person name="Furey T.S."/>
            <person name="Hinrichs A.S."/>
            <person name="Karolchik D."/>
            <person name="Kent W.J."/>
            <person name="Rosenbloom K.R."/>
            <person name="Trumbower H."/>
            <person name="Weirauch M."/>
            <person name="Cooper D.N."/>
            <person name="Stenson P.D."/>
            <person name="Ma B."/>
            <person name="Brent M."/>
            <person name="Arumugam M."/>
            <person name="Shteynberg D."/>
            <person name="Copley R.R."/>
            <person name="Taylor M.S."/>
            <person name="Riethman H."/>
            <person name="Mudunuri U."/>
            <person name="Peterson J."/>
            <person name="Guyer M."/>
            <person name="Felsenfeld A."/>
            <person name="Old S."/>
            <person name="Mockrin S."/>
            <person name="Collins F.S."/>
        </authorList>
    </citation>
    <scope>NUCLEOTIDE SEQUENCE [LARGE SCALE GENOMIC DNA]</scope>
    <source>
        <strain>Brown Norway</strain>
    </source>
</reference>
<reference key="6">
    <citation type="submission" date="2005-09" db="EMBL/GenBank/DDBJ databases">
        <authorList>
            <person name="Mural R.J."/>
            <person name="Adams M.D."/>
            <person name="Myers E.W."/>
            <person name="Smith H.O."/>
            <person name="Venter J.C."/>
        </authorList>
    </citation>
    <scope>NUCLEOTIDE SEQUENCE [LARGE SCALE GENOMIC DNA]</scope>
</reference>
<reference key="7">
    <citation type="journal article" date="2004" name="Genome Res.">
        <title>The status, quality, and expansion of the NIH full-length cDNA project: the Mammalian Gene Collection (MGC).</title>
        <authorList>
            <consortium name="The MGC Project Team"/>
        </authorList>
    </citation>
    <scope>NUCLEOTIDE SEQUENCE [LARGE SCALE MRNA]</scope>
    <source>
        <tissue>Testis</tissue>
    </source>
</reference>
<dbReference type="EC" id="5.3.99.3" evidence="3 4"/>
<dbReference type="EC" id="1.11.1.-" evidence="1"/>
<dbReference type="EC" id="2.5.1.18" evidence="1"/>
<dbReference type="EMBL" id="AB041998">
    <property type="protein sequence ID" value="BAA96084.1"/>
    <property type="molecule type" value="mRNA"/>
</dbReference>
<dbReference type="EMBL" id="AB035145">
    <property type="protein sequence ID" value="BAA95808.1"/>
    <property type="molecule type" value="mRNA"/>
</dbReference>
<dbReference type="EMBL" id="AB048730">
    <property type="protein sequence ID" value="BAB20597.1"/>
    <property type="molecule type" value="mRNA"/>
</dbReference>
<dbReference type="EMBL" id="AF280967">
    <property type="protein sequence ID" value="AAG24803.1"/>
    <property type="molecule type" value="mRNA"/>
</dbReference>
<dbReference type="EMBL" id="AC125306">
    <property type="status" value="NOT_ANNOTATED_CDS"/>
    <property type="molecule type" value="Genomic_DNA"/>
</dbReference>
<dbReference type="EMBL" id="CH474001">
    <property type="protein sequence ID" value="EDL93288.1"/>
    <property type="molecule type" value="Genomic_DNA"/>
</dbReference>
<dbReference type="EMBL" id="BC105858">
    <property type="protein sequence ID" value="AAI05859.1"/>
    <property type="molecule type" value="mRNA"/>
</dbReference>
<dbReference type="RefSeq" id="NP_067594.1">
    <property type="nucleotide sequence ID" value="NM_021583.3"/>
</dbReference>
<dbReference type="SMR" id="Q9JHF3"/>
<dbReference type="FunCoup" id="Q9JHF3">
    <property type="interactions" value="54"/>
</dbReference>
<dbReference type="STRING" id="10116.ENSRNOP00000044191"/>
<dbReference type="PhosphoSitePlus" id="Q9JHF3"/>
<dbReference type="PaxDb" id="10116-ENSRNOP00000044191"/>
<dbReference type="GeneID" id="59103"/>
<dbReference type="KEGG" id="rno:59103"/>
<dbReference type="UCSC" id="RGD:62076">
    <property type="organism name" value="rat"/>
</dbReference>
<dbReference type="AGR" id="RGD:62076"/>
<dbReference type="CTD" id="9536"/>
<dbReference type="RGD" id="62076">
    <property type="gene designation" value="Ptges"/>
</dbReference>
<dbReference type="eggNOG" id="ENOG502RZBK">
    <property type="taxonomic scope" value="Eukaryota"/>
</dbReference>
<dbReference type="HOGENOM" id="CLU_105467_1_1_1"/>
<dbReference type="InParanoid" id="Q9JHF3"/>
<dbReference type="OrthoDB" id="67528at9989"/>
<dbReference type="PhylomeDB" id="Q9JHF3"/>
<dbReference type="Reactome" id="R-RNO-2162123">
    <property type="pathway name" value="Synthesis of Prostaglandins (PG) and Thromboxanes (TX)"/>
</dbReference>
<dbReference type="UniPathway" id="UPA00662"/>
<dbReference type="PRO" id="PR:Q9JHF3"/>
<dbReference type="Proteomes" id="UP000002494">
    <property type="component" value="Chromosome 3"/>
</dbReference>
<dbReference type="Proteomes" id="UP000234681">
    <property type="component" value="Chromosome 3"/>
</dbReference>
<dbReference type="Bgee" id="ENSRNOG00000006320">
    <property type="expression patterns" value="Expressed in ovary and 17 other cell types or tissues"/>
</dbReference>
<dbReference type="GO" id="GO:0005737">
    <property type="term" value="C:cytoplasm"/>
    <property type="evidence" value="ECO:0000266"/>
    <property type="project" value="RGD"/>
</dbReference>
<dbReference type="GO" id="GO:0016020">
    <property type="term" value="C:membrane"/>
    <property type="evidence" value="ECO:0000266"/>
    <property type="project" value="RGD"/>
</dbReference>
<dbReference type="GO" id="GO:0005641">
    <property type="term" value="C:nuclear envelope lumen"/>
    <property type="evidence" value="ECO:0000266"/>
    <property type="project" value="RGD"/>
</dbReference>
<dbReference type="GO" id="GO:0048471">
    <property type="term" value="C:perinuclear region of cytoplasm"/>
    <property type="evidence" value="ECO:0000314"/>
    <property type="project" value="RGD"/>
</dbReference>
<dbReference type="GO" id="GO:0043295">
    <property type="term" value="F:glutathione binding"/>
    <property type="evidence" value="ECO:0000266"/>
    <property type="project" value="RGD"/>
</dbReference>
<dbReference type="GO" id="GO:0004602">
    <property type="term" value="F:glutathione peroxidase activity"/>
    <property type="evidence" value="ECO:0000250"/>
    <property type="project" value="UniProtKB"/>
</dbReference>
<dbReference type="GO" id="GO:0004364">
    <property type="term" value="F:glutathione transferase activity"/>
    <property type="evidence" value="ECO:0000250"/>
    <property type="project" value="UniProtKB"/>
</dbReference>
<dbReference type="GO" id="GO:0004667">
    <property type="term" value="F:prostaglandin-D synthase activity"/>
    <property type="evidence" value="ECO:0000314"/>
    <property type="project" value="UniProtKB"/>
</dbReference>
<dbReference type="GO" id="GO:0050220">
    <property type="term" value="F:prostaglandin-E synthase activity"/>
    <property type="evidence" value="ECO:0000314"/>
    <property type="project" value="RGD"/>
</dbReference>
<dbReference type="GO" id="GO:0008283">
    <property type="term" value="P:cell population proliferation"/>
    <property type="evidence" value="ECO:0000266"/>
    <property type="project" value="RGD"/>
</dbReference>
<dbReference type="GO" id="GO:1904639">
    <property type="term" value="P:cellular response to resveratrol"/>
    <property type="evidence" value="ECO:0000270"/>
    <property type="project" value="RGD"/>
</dbReference>
<dbReference type="GO" id="GO:0002544">
    <property type="term" value="P:chronic inflammatory response"/>
    <property type="evidence" value="ECO:0000270"/>
    <property type="project" value="RGD"/>
</dbReference>
<dbReference type="GO" id="GO:0008285">
    <property type="term" value="P:negative regulation of cell population proliferation"/>
    <property type="evidence" value="ECO:0000266"/>
    <property type="project" value="RGD"/>
</dbReference>
<dbReference type="GO" id="GO:0032308">
    <property type="term" value="P:positive regulation of prostaglandin secretion"/>
    <property type="evidence" value="ECO:0000266"/>
    <property type="project" value="RGD"/>
</dbReference>
<dbReference type="GO" id="GO:0001516">
    <property type="term" value="P:prostaglandin biosynthetic process"/>
    <property type="evidence" value="ECO:0000314"/>
    <property type="project" value="RGD"/>
</dbReference>
<dbReference type="GO" id="GO:0006693">
    <property type="term" value="P:prostaglandin metabolic process"/>
    <property type="evidence" value="ECO:0000266"/>
    <property type="project" value="RGD"/>
</dbReference>
<dbReference type="GO" id="GO:0031620">
    <property type="term" value="P:regulation of fever generation"/>
    <property type="evidence" value="ECO:0000250"/>
    <property type="project" value="UniProtKB"/>
</dbReference>
<dbReference type="GO" id="GO:0050727">
    <property type="term" value="P:regulation of inflammatory response"/>
    <property type="evidence" value="ECO:0000250"/>
    <property type="project" value="UniProtKB"/>
</dbReference>
<dbReference type="GO" id="GO:0051592">
    <property type="term" value="P:response to calcium ion"/>
    <property type="evidence" value="ECO:0000270"/>
    <property type="project" value="RGD"/>
</dbReference>
<dbReference type="GO" id="GO:0034097">
    <property type="term" value="P:response to cytokine"/>
    <property type="evidence" value="ECO:0000270"/>
    <property type="project" value="RGD"/>
</dbReference>
<dbReference type="GO" id="GO:0032496">
    <property type="term" value="P:response to lipopolysaccharide"/>
    <property type="evidence" value="ECO:0000270"/>
    <property type="project" value="RGD"/>
</dbReference>
<dbReference type="GO" id="GO:0032526">
    <property type="term" value="P:response to retinoic acid"/>
    <property type="evidence" value="ECO:0000270"/>
    <property type="project" value="RGD"/>
</dbReference>
<dbReference type="GO" id="GO:0019233">
    <property type="term" value="P:sensory perception of pain"/>
    <property type="evidence" value="ECO:0000250"/>
    <property type="project" value="UniProtKB"/>
</dbReference>
<dbReference type="FunFam" id="1.20.120.550:FF:000002">
    <property type="entry name" value="Microsomal glutathione S-transferase 1"/>
    <property type="match status" value="1"/>
</dbReference>
<dbReference type="Gene3D" id="1.20.120.550">
    <property type="entry name" value="Membrane associated eicosanoid/glutathione metabolism-like domain"/>
    <property type="match status" value="1"/>
</dbReference>
<dbReference type="InterPro" id="IPR023352">
    <property type="entry name" value="MAPEG-like_dom_sf"/>
</dbReference>
<dbReference type="InterPro" id="IPR001129">
    <property type="entry name" value="Membr-assoc_MAPEG"/>
</dbReference>
<dbReference type="InterPro" id="IPR040162">
    <property type="entry name" value="MGST1-like"/>
</dbReference>
<dbReference type="PANTHER" id="PTHR10689">
    <property type="entry name" value="MICROSOMAL GLUTATHIONE S-TRANSFERASE 1"/>
    <property type="match status" value="1"/>
</dbReference>
<dbReference type="PANTHER" id="PTHR10689:SF9">
    <property type="entry name" value="PROSTAGLANDIN E SYNTHASE"/>
    <property type="match status" value="1"/>
</dbReference>
<dbReference type="Pfam" id="PF01124">
    <property type="entry name" value="MAPEG"/>
    <property type="match status" value="1"/>
</dbReference>
<dbReference type="SUPFAM" id="SSF161084">
    <property type="entry name" value="MAPEG domain-like"/>
    <property type="match status" value="1"/>
</dbReference>
<sequence>MTSLGLVMENSQVLPAFLLCSTLLVIKMYAVAVITGQVRLRKKAFANPEDALKRGGLQYCRSDPDVERCLRAHRNDMETIYPFLFLGFVYSFLGPNPLIAWIHFLVVLTGRVVHTVAYLGKMNPRIRSGAYVLAQFACFSMALQILWEVAHHL</sequence>
<keyword id="KW-0963">Cytoplasm</keyword>
<keyword id="KW-0275">Fatty acid biosynthesis</keyword>
<keyword id="KW-0276">Fatty acid metabolism</keyword>
<keyword id="KW-0413">Isomerase</keyword>
<keyword id="KW-0444">Lipid biosynthesis</keyword>
<keyword id="KW-0443">Lipid metabolism</keyword>
<keyword id="KW-0472">Membrane</keyword>
<keyword id="KW-0560">Oxidoreductase</keyword>
<keyword id="KW-0643">Prostaglandin biosynthesis</keyword>
<keyword id="KW-0644">Prostaglandin metabolism</keyword>
<keyword id="KW-1185">Reference proteome</keyword>
<keyword id="KW-0808">Transferase</keyword>
<keyword id="KW-0812">Transmembrane</keyword>
<keyword id="KW-1133">Transmembrane helix</keyword>